<sequence length="257" mass="28966">MQKVTIQEAEHLLQEIMSEEDDRFQILIKDERKGVQKLISKWYKQKELAQKEKEKFLEMSKYENALREKGLTYIAGIDEVGRGPLAGPVVTAAVVLPEDFYIPGLNDSKKLSEAKRERFYDEIKAQAIAIGVGIVSPQVIDEINIYQATKQAMLDAVANLSCTPQYLLIDAMKLPTPIPQTSIIKGDAKSISISAASIIAKVTRDRMMKELGEKYPAYGFEQHMGYGTKQHLEAIEAHGILEEHRKSFAPIKDMIQK</sequence>
<evidence type="ECO:0000255" key="1">
    <source>
        <dbReference type="HAMAP-Rule" id="MF_00052"/>
    </source>
</evidence>
<evidence type="ECO:0000255" key="2">
    <source>
        <dbReference type="PROSITE-ProRule" id="PRU01319"/>
    </source>
</evidence>
<reference key="1">
    <citation type="journal article" date="2004" name="Nucleic Acids Res.">
        <title>The genome sequence of Bacillus cereus ATCC 10987 reveals metabolic adaptations and a large plasmid related to Bacillus anthracis pXO1.</title>
        <authorList>
            <person name="Rasko D.A."/>
            <person name="Ravel J."/>
            <person name="Oekstad O.A."/>
            <person name="Helgason E."/>
            <person name="Cer R.Z."/>
            <person name="Jiang L."/>
            <person name="Shores K.A."/>
            <person name="Fouts D.E."/>
            <person name="Tourasse N.J."/>
            <person name="Angiuoli S.V."/>
            <person name="Kolonay J.F."/>
            <person name="Nelson W.C."/>
            <person name="Kolstoe A.-B."/>
            <person name="Fraser C.M."/>
            <person name="Read T.D."/>
        </authorList>
    </citation>
    <scope>NUCLEOTIDE SEQUENCE [LARGE SCALE GENOMIC DNA]</scope>
    <source>
        <strain>ATCC 10987 / NRS 248</strain>
    </source>
</reference>
<comment type="function">
    <text evidence="1">Endonuclease that specifically degrades the RNA of RNA-DNA hybrids.</text>
</comment>
<comment type="catalytic activity">
    <reaction evidence="1">
        <text>Endonucleolytic cleavage to 5'-phosphomonoester.</text>
        <dbReference type="EC" id="3.1.26.4"/>
    </reaction>
</comment>
<comment type="cofactor">
    <cofactor evidence="1">
        <name>Mn(2+)</name>
        <dbReference type="ChEBI" id="CHEBI:29035"/>
    </cofactor>
    <cofactor evidence="1">
        <name>Mg(2+)</name>
        <dbReference type="ChEBI" id="CHEBI:18420"/>
    </cofactor>
    <text evidence="1">Manganese or magnesium. Binds 1 divalent metal ion per monomer in the absence of substrate. May bind a second metal ion after substrate binding.</text>
</comment>
<comment type="subcellular location">
    <subcellularLocation>
        <location evidence="1">Cytoplasm</location>
    </subcellularLocation>
</comment>
<comment type="similarity">
    <text evidence="1">Belongs to the RNase HII family.</text>
</comment>
<protein>
    <recommendedName>
        <fullName evidence="1">Ribonuclease HII</fullName>
        <shortName evidence="1">RNase HII</shortName>
        <ecNumber evidence="1">3.1.26.4</ecNumber>
    </recommendedName>
</protein>
<proteinExistence type="inferred from homology"/>
<dbReference type="EC" id="3.1.26.4" evidence="1"/>
<dbReference type="EMBL" id="AE017194">
    <property type="protein sequence ID" value="AAS42784.1"/>
    <property type="molecule type" value="Genomic_DNA"/>
</dbReference>
<dbReference type="SMR" id="Q732N3"/>
<dbReference type="KEGG" id="bca:BCE_3879"/>
<dbReference type="HOGENOM" id="CLU_036532_2_1_9"/>
<dbReference type="Proteomes" id="UP000002527">
    <property type="component" value="Chromosome"/>
</dbReference>
<dbReference type="GO" id="GO:0005737">
    <property type="term" value="C:cytoplasm"/>
    <property type="evidence" value="ECO:0007669"/>
    <property type="project" value="UniProtKB-SubCell"/>
</dbReference>
<dbReference type="GO" id="GO:0032299">
    <property type="term" value="C:ribonuclease H2 complex"/>
    <property type="evidence" value="ECO:0007669"/>
    <property type="project" value="TreeGrafter"/>
</dbReference>
<dbReference type="GO" id="GO:0030145">
    <property type="term" value="F:manganese ion binding"/>
    <property type="evidence" value="ECO:0007669"/>
    <property type="project" value="UniProtKB-UniRule"/>
</dbReference>
<dbReference type="GO" id="GO:0003723">
    <property type="term" value="F:RNA binding"/>
    <property type="evidence" value="ECO:0007669"/>
    <property type="project" value="InterPro"/>
</dbReference>
<dbReference type="GO" id="GO:0004523">
    <property type="term" value="F:RNA-DNA hybrid ribonuclease activity"/>
    <property type="evidence" value="ECO:0007669"/>
    <property type="project" value="UniProtKB-UniRule"/>
</dbReference>
<dbReference type="GO" id="GO:0043137">
    <property type="term" value="P:DNA replication, removal of RNA primer"/>
    <property type="evidence" value="ECO:0007669"/>
    <property type="project" value="TreeGrafter"/>
</dbReference>
<dbReference type="GO" id="GO:0006298">
    <property type="term" value="P:mismatch repair"/>
    <property type="evidence" value="ECO:0007669"/>
    <property type="project" value="TreeGrafter"/>
</dbReference>
<dbReference type="CDD" id="cd07182">
    <property type="entry name" value="RNase_HII_bacteria_HII_like"/>
    <property type="match status" value="1"/>
</dbReference>
<dbReference type="FunFam" id="3.30.420.10:FF:000006">
    <property type="entry name" value="Ribonuclease HII"/>
    <property type="match status" value="1"/>
</dbReference>
<dbReference type="Gene3D" id="3.30.420.10">
    <property type="entry name" value="Ribonuclease H-like superfamily/Ribonuclease H"/>
    <property type="match status" value="1"/>
</dbReference>
<dbReference type="HAMAP" id="MF_00052_B">
    <property type="entry name" value="RNase_HII_B"/>
    <property type="match status" value="1"/>
</dbReference>
<dbReference type="InterPro" id="IPR022898">
    <property type="entry name" value="RNase_HII"/>
</dbReference>
<dbReference type="InterPro" id="IPR001352">
    <property type="entry name" value="RNase_HII/HIII"/>
</dbReference>
<dbReference type="InterPro" id="IPR024567">
    <property type="entry name" value="RNase_HII/HIII_dom"/>
</dbReference>
<dbReference type="InterPro" id="IPR012337">
    <property type="entry name" value="RNaseH-like_sf"/>
</dbReference>
<dbReference type="InterPro" id="IPR036397">
    <property type="entry name" value="RNaseH_sf"/>
</dbReference>
<dbReference type="NCBIfam" id="NF000594">
    <property type="entry name" value="PRK00015.1-1"/>
    <property type="match status" value="1"/>
</dbReference>
<dbReference type="NCBIfam" id="NF000595">
    <property type="entry name" value="PRK00015.1-3"/>
    <property type="match status" value="1"/>
</dbReference>
<dbReference type="PANTHER" id="PTHR10954">
    <property type="entry name" value="RIBONUCLEASE H2 SUBUNIT A"/>
    <property type="match status" value="1"/>
</dbReference>
<dbReference type="PANTHER" id="PTHR10954:SF18">
    <property type="entry name" value="RIBONUCLEASE HII"/>
    <property type="match status" value="1"/>
</dbReference>
<dbReference type="Pfam" id="PF01351">
    <property type="entry name" value="RNase_HII"/>
    <property type="match status" value="1"/>
</dbReference>
<dbReference type="SUPFAM" id="SSF53098">
    <property type="entry name" value="Ribonuclease H-like"/>
    <property type="match status" value="1"/>
</dbReference>
<dbReference type="PROSITE" id="PS51975">
    <property type="entry name" value="RNASE_H_2"/>
    <property type="match status" value="1"/>
</dbReference>
<name>RNH2_BACC1</name>
<accession>Q732N3</accession>
<gene>
    <name evidence="1" type="primary">rnhB</name>
    <name type="ordered locus">BCE_3879</name>
</gene>
<organism>
    <name type="scientific">Bacillus cereus (strain ATCC 10987 / NRS 248)</name>
    <dbReference type="NCBI Taxonomy" id="222523"/>
    <lineage>
        <taxon>Bacteria</taxon>
        <taxon>Bacillati</taxon>
        <taxon>Bacillota</taxon>
        <taxon>Bacilli</taxon>
        <taxon>Bacillales</taxon>
        <taxon>Bacillaceae</taxon>
        <taxon>Bacillus</taxon>
        <taxon>Bacillus cereus group</taxon>
    </lineage>
</organism>
<feature type="chain" id="PRO_0000111536" description="Ribonuclease HII">
    <location>
        <begin position="1"/>
        <end position="257"/>
    </location>
</feature>
<feature type="domain" description="RNase H type-2" evidence="2">
    <location>
        <begin position="72"/>
        <end position="257"/>
    </location>
</feature>
<feature type="binding site" evidence="1">
    <location>
        <position position="78"/>
    </location>
    <ligand>
        <name>a divalent metal cation</name>
        <dbReference type="ChEBI" id="CHEBI:60240"/>
    </ligand>
</feature>
<feature type="binding site" evidence="1">
    <location>
        <position position="79"/>
    </location>
    <ligand>
        <name>a divalent metal cation</name>
        <dbReference type="ChEBI" id="CHEBI:60240"/>
    </ligand>
</feature>
<feature type="binding site" evidence="1">
    <location>
        <position position="170"/>
    </location>
    <ligand>
        <name>a divalent metal cation</name>
        <dbReference type="ChEBI" id="CHEBI:60240"/>
    </ligand>
</feature>
<keyword id="KW-0963">Cytoplasm</keyword>
<keyword id="KW-0255">Endonuclease</keyword>
<keyword id="KW-0378">Hydrolase</keyword>
<keyword id="KW-0464">Manganese</keyword>
<keyword id="KW-0479">Metal-binding</keyword>
<keyword id="KW-0540">Nuclease</keyword>